<comment type="function">
    <text evidence="1">Catalyzes the 2-thiolation of uridine at the wobble position (U34) of tRNA, leading to the formation of s(2)U34.</text>
</comment>
<comment type="catalytic activity">
    <reaction evidence="1">
        <text>S-sulfanyl-L-cysteinyl-[protein] + uridine(34) in tRNA + AH2 + ATP = 2-thiouridine(34) in tRNA + L-cysteinyl-[protein] + A + AMP + diphosphate + H(+)</text>
        <dbReference type="Rhea" id="RHEA:47032"/>
        <dbReference type="Rhea" id="RHEA-COMP:10131"/>
        <dbReference type="Rhea" id="RHEA-COMP:11726"/>
        <dbReference type="Rhea" id="RHEA-COMP:11727"/>
        <dbReference type="Rhea" id="RHEA-COMP:11728"/>
        <dbReference type="ChEBI" id="CHEBI:13193"/>
        <dbReference type="ChEBI" id="CHEBI:15378"/>
        <dbReference type="ChEBI" id="CHEBI:17499"/>
        <dbReference type="ChEBI" id="CHEBI:29950"/>
        <dbReference type="ChEBI" id="CHEBI:30616"/>
        <dbReference type="ChEBI" id="CHEBI:33019"/>
        <dbReference type="ChEBI" id="CHEBI:61963"/>
        <dbReference type="ChEBI" id="CHEBI:65315"/>
        <dbReference type="ChEBI" id="CHEBI:87170"/>
        <dbReference type="ChEBI" id="CHEBI:456215"/>
        <dbReference type="EC" id="2.8.1.13"/>
    </reaction>
</comment>
<comment type="subcellular location">
    <subcellularLocation>
        <location evidence="1">Cytoplasm</location>
    </subcellularLocation>
</comment>
<comment type="similarity">
    <text evidence="1">Belongs to the MnmA/TRMU family.</text>
</comment>
<protein>
    <recommendedName>
        <fullName evidence="1">tRNA-specific 2-thiouridylase MnmA</fullName>
        <ecNumber evidence="1">2.8.1.13</ecNumber>
    </recommendedName>
</protein>
<proteinExistence type="inferred from homology"/>
<accession>A1UE63</accession>
<reference key="1">
    <citation type="submission" date="2006-12" db="EMBL/GenBank/DDBJ databases">
        <title>Complete sequence of chromosome of Mycobacterium sp. KMS.</title>
        <authorList>
            <consortium name="US DOE Joint Genome Institute"/>
            <person name="Copeland A."/>
            <person name="Lucas S."/>
            <person name="Lapidus A."/>
            <person name="Barry K."/>
            <person name="Detter J.C."/>
            <person name="Glavina del Rio T."/>
            <person name="Hammon N."/>
            <person name="Israni S."/>
            <person name="Dalin E."/>
            <person name="Tice H."/>
            <person name="Pitluck S."/>
            <person name="Kiss H."/>
            <person name="Brettin T."/>
            <person name="Bruce D."/>
            <person name="Han C."/>
            <person name="Tapia R."/>
            <person name="Gilna P."/>
            <person name="Schmutz J."/>
            <person name="Larimer F."/>
            <person name="Land M."/>
            <person name="Hauser L."/>
            <person name="Kyrpides N."/>
            <person name="Mikhailova N."/>
            <person name="Miller C.D."/>
            <person name="Richardson P."/>
        </authorList>
    </citation>
    <scope>NUCLEOTIDE SEQUENCE [LARGE SCALE GENOMIC DNA]</scope>
    <source>
        <strain>KMS</strain>
    </source>
</reference>
<name>MNMA_MYCSK</name>
<feature type="chain" id="PRO_1000009542" description="tRNA-specific 2-thiouridylase MnmA">
    <location>
        <begin position="1"/>
        <end position="359"/>
    </location>
</feature>
<feature type="region of interest" description="Interaction with tRNA" evidence="1">
    <location>
        <begin position="143"/>
        <end position="145"/>
    </location>
</feature>
<feature type="active site" description="Nucleophile" evidence="1">
    <location>
        <position position="101"/>
    </location>
</feature>
<feature type="active site" description="Cysteine persulfide intermediate" evidence="1">
    <location>
        <position position="193"/>
    </location>
</feature>
<feature type="binding site" evidence="1">
    <location>
        <begin position="6"/>
        <end position="13"/>
    </location>
    <ligand>
        <name>ATP</name>
        <dbReference type="ChEBI" id="CHEBI:30616"/>
    </ligand>
</feature>
<feature type="binding site" evidence="1">
    <location>
        <position position="32"/>
    </location>
    <ligand>
        <name>ATP</name>
        <dbReference type="ChEBI" id="CHEBI:30616"/>
    </ligand>
</feature>
<feature type="binding site" evidence="1">
    <location>
        <position position="125"/>
    </location>
    <ligand>
        <name>ATP</name>
        <dbReference type="ChEBI" id="CHEBI:30616"/>
    </ligand>
</feature>
<feature type="site" description="Interaction with tRNA" evidence="1">
    <location>
        <position position="126"/>
    </location>
</feature>
<feature type="site" description="Interaction with tRNA" evidence="1">
    <location>
        <position position="333"/>
    </location>
</feature>
<feature type="disulfide bond" description="Alternate" evidence="1">
    <location>
        <begin position="101"/>
        <end position="193"/>
    </location>
</feature>
<keyword id="KW-0067">ATP-binding</keyword>
<keyword id="KW-0963">Cytoplasm</keyword>
<keyword id="KW-1015">Disulfide bond</keyword>
<keyword id="KW-0547">Nucleotide-binding</keyword>
<keyword id="KW-0694">RNA-binding</keyword>
<keyword id="KW-0808">Transferase</keyword>
<keyword id="KW-0819">tRNA processing</keyword>
<keyword id="KW-0820">tRNA-binding</keyword>
<gene>
    <name evidence="1" type="primary">mnmA</name>
    <name type="synonym">trmU</name>
    <name type="ordered locus">Mkms_1922</name>
</gene>
<evidence type="ECO:0000255" key="1">
    <source>
        <dbReference type="HAMAP-Rule" id="MF_00144"/>
    </source>
</evidence>
<organism>
    <name type="scientific">Mycobacterium sp. (strain KMS)</name>
    <dbReference type="NCBI Taxonomy" id="189918"/>
    <lineage>
        <taxon>Bacteria</taxon>
        <taxon>Bacillati</taxon>
        <taxon>Actinomycetota</taxon>
        <taxon>Actinomycetes</taxon>
        <taxon>Mycobacteriales</taxon>
        <taxon>Mycobacteriaceae</taxon>
        <taxon>Mycobacterium</taxon>
    </lineage>
</organism>
<sequence>MRVLVAMSGGVDSSVAAARMVDAGHDVVGVHLALSATPGTLRTGSRGCCSKEDAGDARRVADVLDIPFYVWDFADRFKEDVIDDFVASYERGETPNPCVRCNEKIKFSALAGRALALGFDALATGHYARLSDGRLRRAVDADKDQSYVLAVLTAQQLRHAVFPIGDTPKAQIRAEAAERGLAVADKPDSHDICFIPSGDTRAFLGARIGVRRGAVVDAGGTKLAEHEGVHGFTIGQRKGLGIAGPGPDGQPRYVTGIDAATGTVRVGGAEDLDVWRLTGERPVFTSGAAFGGPVECQVQVRAHGGLADAVASHDAGVLSVELRAPLRGVAAGQTMVIYRPDPEGDEVLASATISGADGR</sequence>
<dbReference type="EC" id="2.8.1.13" evidence="1"/>
<dbReference type="EMBL" id="CP000518">
    <property type="protein sequence ID" value="ABL91121.1"/>
    <property type="molecule type" value="Genomic_DNA"/>
</dbReference>
<dbReference type="SMR" id="A1UE63"/>
<dbReference type="STRING" id="189918.Mkms_1922"/>
<dbReference type="KEGG" id="mkm:Mkms_1922"/>
<dbReference type="HOGENOM" id="CLU_035188_0_2_11"/>
<dbReference type="OrthoDB" id="9800696at2"/>
<dbReference type="GO" id="GO:0005737">
    <property type="term" value="C:cytoplasm"/>
    <property type="evidence" value="ECO:0007669"/>
    <property type="project" value="UniProtKB-SubCell"/>
</dbReference>
<dbReference type="GO" id="GO:0005524">
    <property type="term" value="F:ATP binding"/>
    <property type="evidence" value="ECO:0007669"/>
    <property type="project" value="UniProtKB-KW"/>
</dbReference>
<dbReference type="GO" id="GO:0000049">
    <property type="term" value="F:tRNA binding"/>
    <property type="evidence" value="ECO:0007669"/>
    <property type="project" value="UniProtKB-KW"/>
</dbReference>
<dbReference type="GO" id="GO:0103016">
    <property type="term" value="F:tRNA-uridine 2-sulfurtransferase activity"/>
    <property type="evidence" value="ECO:0007669"/>
    <property type="project" value="UniProtKB-EC"/>
</dbReference>
<dbReference type="GO" id="GO:0002143">
    <property type="term" value="P:tRNA wobble position uridine thiolation"/>
    <property type="evidence" value="ECO:0007669"/>
    <property type="project" value="TreeGrafter"/>
</dbReference>
<dbReference type="CDD" id="cd01998">
    <property type="entry name" value="MnmA_TRMU-like"/>
    <property type="match status" value="1"/>
</dbReference>
<dbReference type="FunFam" id="3.40.50.620:FF:000057">
    <property type="entry name" value="tRNA-specific 2-thiouridylase MnmA"/>
    <property type="match status" value="1"/>
</dbReference>
<dbReference type="Gene3D" id="2.30.30.280">
    <property type="entry name" value="Adenine nucleotide alpha hydrolases-like domains"/>
    <property type="match status" value="1"/>
</dbReference>
<dbReference type="Gene3D" id="3.40.50.620">
    <property type="entry name" value="HUPs"/>
    <property type="match status" value="1"/>
</dbReference>
<dbReference type="Gene3D" id="2.40.30.10">
    <property type="entry name" value="Translation factors"/>
    <property type="match status" value="1"/>
</dbReference>
<dbReference type="HAMAP" id="MF_00144">
    <property type="entry name" value="tRNA_thiouridyl_MnmA"/>
    <property type="match status" value="1"/>
</dbReference>
<dbReference type="InterPro" id="IPR004506">
    <property type="entry name" value="MnmA-like"/>
</dbReference>
<dbReference type="InterPro" id="IPR046885">
    <property type="entry name" value="MnmA-like_C"/>
</dbReference>
<dbReference type="InterPro" id="IPR046884">
    <property type="entry name" value="MnmA-like_central"/>
</dbReference>
<dbReference type="InterPro" id="IPR023382">
    <property type="entry name" value="MnmA-like_central_sf"/>
</dbReference>
<dbReference type="InterPro" id="IPR014729">
    <property type="entry name" value="Rossmann-like_a/b/a_fold"/>
</dbReference>
<dbReference type="NCBIfam" id="NF001138">
    <property type="entry name" value="PRK00143.1"/>
    <property type="match status" value="1"/>
</dbReference>
<dbReference type="NCBIfam" id="TIGR00420">
    <property type="entry name" value="trmU"/>
    <property type="match status" value="1"/>
</dbReference>
<dbReference type="PANTHER" id="PTHR11933:SF5">
    <property type="entry name" value="MITOCHONDRIAL TRNA-SPECIFIC 2-THIOURIDYLASE 1"/>
    <property type="match status" value="1"/>
</dbReference>
<dbReference type="PANTHER" id="PTHR11933">
    <property type="entry name" value="TRNA 5-METHYLAMINOMETHYL-2-THIOURIDYLATE -METHYLTRANSFERASE"/>
    <property type="match status" value="1"/>
</dbReference>
<dbReference type="Pfam" id="PF03054">
    <property type="entry name" value="tRNA_Me_trans"/>
    <property type="match status" value="1"/>
</dbReference>
<dbReference type="Pfam" id="PF20258">
    <property type="entry name" value="tRNA_Me_trans_C"/>
    <property type="match status" value="1"/>
</dbReference>
<dbReference type="Pfam" id="PF20259">
    <property type="entry name" value="tRNA_Me_trans_M"/>
    <property type="match status" value="1"/>
</dbReference>
<dbReference type="SUPFAM" id="SSF52402">
    <property type="entry name" value="Adenine nucleotide alpha hydrolases-like"/>
    <property type="match status" value="1"/>
</dbReference>